<name>RPOB_GLOVI</name>
<dbReference type="EC" id="2.7.7.6" evidence="1"/>
<dbReference type="EMBL" id="BA000045">
    <property type="protein sequence ID" value="BAC90224.1"/>
    <property type="molecule type" value="Genomic_DNA"/>
</dbReference>
<dbReference type="RefSeq" id="NP_925229.1">
    <property type="nucleotide sequence ID" value="NC_005125.1"/>
</dbReference>
<dbReference type="SMR" id="Q7NIA0"/>
<dbReference type="FunCoup" id="Q7NIA0">
    <property type="interactions" value="284"/>
</dbReference>
<dbReference type="STRING" id="251221.gene:10759778"/>
<dbReference type="EnsemblBacteria" id="BAC90224">
    <property type="protein sequence ID" value="BAC90224"/>
    <property type="gene ID" value="BAC90224"/>
</dbReference>
<dbReference type="KEGG" id="gvi:glr2283"/>
<dbReference type="PATRIC" id="fig|251221.4.peg.2318"/>
<dbReference type="eggNOG" id="COG0085">
    <property type="taxonomic scope" value="Bacteria"/>
</dbReference>
<dbReference type="HOGENOM" id="CLU_000524_4_1_3"/>
<dbReference type="InParanoid" id="Q7NIA0"/>
<dbReference type="OrthoDB" id="9803954at2"/>
<dbReference type="PhylomeDB" id="Q7NIA0"/>
<dbReference type="Proteomes" id="UP000000557">
    <property type="component" value="Chromosome"/>
</dbReference>
<dbReference type="GO" id="GO:0000428">
    <property type="term" value="C:DNA-directed RNA polymerase complex"/>
    <property type="evidence" value="ECO:0007669"/>
    <property type="project" value="UniProtKB-KW"/>
</dbReference>
<dbReference type="GO" id="GO:0003677">
    <property type="term" value="F:DNA binding"/>
    <property type="evidence" value="ECO:0007669"/>
    <property type="project" value="UniProtKB-UniRule"/>
</dbReference>
<dbReference type="GO" id="GO:0003899">
    <property type="term" value="F:DNA-directed RNA polymerase activity"/>
    <property type="evidence" value="ECO:0007669"/>
    <property type="project" value="UniProtKB-UniRule"/>
</dbReference>
<dbReference type="GO" id="GO:0032549">
    <property type="term" value="F:ribonucleoside binding"/>
    <property type="evidence" value="ECO:0007669"/>
    <property type="project" value="InterPro"/>
</dbReference>
<dbReference type="GO" id="GO:0006351">
    <property type="term" value="P:DNA-templated transcription"/>
    <property type="evidence" value="ECO:0007669"/>
    <property type="project" value="UniProtKB-UniRule"/>
</dbReference>
<dbReference type="CDD" id="cd00653">
    <property type="entry name" value="RNA_pol_B_RPB2"/>
    <property type="match status" value="1"/>
</dbReference>
<dbReference type="FunFam" id="3.90.1800.10:FF:000001">
    <property type="entry name" value="DNA-directed RNA polymerase subunit beta"/>
    <property type="match status" value="1"/>
</dbReference>
<dbReference type="Gene3D" id="2.40.50.100">
    <property type="match status" value="1"/>
</dbReference>
<dbReference type="Gene3D" id="2.40.50.150">
    <property type="match status" value="1"/>
</dbReference>
<dbReference type="Gene3D" id="3.90.1100.10">
    <property type="match status" value="1"/>
</dbReference>
<dbReference type="Gene3D" id="2.30.150.10">
    <property type="entry name" value="DNA-directed RNA polymerase, beta subunit, external 1 domain"/>
    <property type="match status" value="1"/>
</dbReference>
<dbReference type="Gene3D" id="2.40.270.10">
    <property type="entry name" value="DNA-directed RNA polymerase, subunit 2, domain 6"/>
    <property type="match status" value="1"/>
</dbReference>
<dbReference type="Gene3D" id="3.90.1800.10">
    <property type="entry name" value="RNA polymerase alpha subunit dimerisation domain"/>
    <property type="match status" value="1"/>
</dbReference>
<dbReference type="Gene3D" id="3.90.1110.10">
    <property type="entry name" value="RNA polymerase Rpb2, domain 2"/>
    <property type="match status" value="1"/>
</dbReference>
<dbReference type="HAMAP" id="MF_01321">
    <property type="entry name" value="RNApol_bact_RpoB"/>
    <property type="match status" value="1"/>
</dbReference>
<dbReference type="InterPro" id="IPR042107">
    <property type="entry name" value="DNA-dir_RNA_pol_bsu_ext_1_sf"/>
</dbReference>
<dbReference type="InterPro" id="IPR019462">
    <property type="entry name" value="DNA-dir_RNA_pol_bsu_external_1"/>
</dbReference>
<dbReference type="InterPro" id="IPR015712">
    <property type="entry name" value="DNA-dir_RNA_pol_su2"/>
</dbReference>
<dbReference type="InterPro" id="IPR007120">
    <property type="entry name" value="DNA-dir_RNAP_su2_dom"/>
</dbReference>
<dbReference type="InterPro" id="IPR037033">
    <property type="entry name" value="DNA-dir_RNAP_su2_hyb_sf"/>
</dbReference>
<dbReference type="InterPro" id="IPR010243">
    <property type="entry name" value="RNA_pol_bsu_bac"/>
</dbReference>
<dbReference type="InterPro" id="IPR007121">
    <property type="entry name" value="RNA_pol_bsu_CS"/>
</dbReference>
<dbReference type="InterPro" id="IPR007644">
    <property type="entry name" value="RNA_pol_bsu_protrusion"/>
</dbReference>
<dbReference type="InterPro" id="IPR007642">
    <property type="entry name" value="RNA_pol_Rpb2_2"/>
</dbReference>
<dbReference type="InterPro" id="IPR037034">
    <property type="entry name" value="RNA_pol_Rpb2_2_sf"/>
</dbReference>
<dbReference type="InterPro" id="IPR007645">
    <property type="entry name" value="RNA_pol_Rpb2_3"/>
</dbReference>
<dbReference type="InterPro" id="IPR007641">
    <property type="entry name" value="RNA_pol_Rpb2_7"/>
</dbReference>
<dbReference type="InterPro" id="IPR014724">
    <property type="entry name" value="RNA_pol_RPB2_OB-fold"/>
</dbReference>
<dbReference type="NCBIfam" id="NF001616">
    <property type="entry name" value="PRK00405.1"/>
    <property type="match status" value="1"/>
</dbReference>
<dbReference type="NCBIfam" id="TIGR02013">
    <property type="entry name" value="rpoB"/>
    <property type="match status" value="1"/>
</dbReference>
<dbReference type="PANTHER" id="PTHR20856">
    <property type="entry name" value="DNA-DIRECTED RNA POLYMERASE I SUBUNIT 2"/>
    <property type="match status" value="1"/>
</dbReference>
<dbReference type="Pfam" id="PF04563">
    <property type="entry name" value="RNA_pol_Rpb2_1"/>
    <property type="match status" value="1"/>
</dbReference>
<dbReference type="Pfam" id="PF04561">
    <property type="entry name" value="RNA_pol_Rpb2_2"/>
    <property type="match status" value="1"/>
</dbReference>
<dbReference type="Pfam" id="PF04565">
    <property type="entry name" value="RNA_pol_Rpb2_3"/>
    <property type="match status" value="1"/>
</dbReference>
<dbReference type="Pfam" id="PF10385">
    <property type="entry name" value="RNA_pol_Rpb2_45"/>
    <property type="match status" value="1"/>
</dbReference>
<dbReference type="Pfam" id="PF00562">
    <property type="entry name" value="RNA_pol_Rpb2_6"/>
    <property type="match status" value="1"/>
</dbReference>
<dbReference type="Pfam" id="PF04560">
    <property type="entry name" value="RNA_pol_Rpb2_7"/>
    <property type="match status" value="1"/>
</dbReference>
<dbReference type="SUPFAM" id="SSF64484">
    <property type="entry name" value="beta and beta-prime subunits of DNA dependent RNA-polymerase"/>
    <property type="match status" value="1"/>
</dbReference>
<dbReference type="PROSITE" id="PS01166">
    <property type="entry name" value="RNA_POL_BETA"/>
    <property type="match status" value="1"/>
</dbReference>
<evidence type="ECO:0000255" key="1">
    <source>
        <dbReference type="HAMAP-Rule" id="MF_01321"/>
    </source>
</evidence>
<evidence type="ECO:0000256" key="2">
    <source>
        <dbReference type="SAM" id="MobiDB-lite"/>
    </source>
</evidence>
<sequence length="1112" mass="124478">MPDFRYADALPEVRMSNALTTPNYLLPDLVEIQRESFRWFLEEGLIEELLSFSPITDYTGKMELHFLQDYKLKEPKYSVEEAKRRDSTYSVQMYVSTRLVNKETGEIKEQQVFIGELPLMTDRGTFIINGAERVIVNQIVRSPGVYYKQELDTNGRKTFNASLIPNRGAWLKFETDANDLVWVRIDKTRKLSAVVLLKALGLSDNEILDAFRHPEYFQKTIEKEGNYSEEEALLELYRKLRPGEPPTVSGGQQLLETRFFDPKRYDLGRVGRYKLNKKLRLSVPETTRILTPQDILASIDYLINLEFDIGSPDDIDHLGNRRVRSVGELLQNQVRVGLNRLERIIRERMTVSEAETLTPASLVNPKPLVAAIKEFFGSSQLSQFMDQTNPLAELTHKRRLSALGPGGLTRERAGFAVRDIHPSHYGRICPIETPEGPNAGLIGSLATHARVNSYGFIETPYKVVKDGRLSGEIKYLTADEEDEFRVAAGDVAVDEGGNILANPVTIRYRQEFGLASPAEVDYVAVSPIQIVSVATSLIPFLEHDDANRALMGANMQRQAVPLLRPERPLVGTGLEGQAARDSGMVIVSDIDGAITYVSGEQIRVRGENGQEFAYPLQKYQRSNQDTCLSQRPIVNVGDQVRNGQILADGSATEGGELALGQNILVAFMPWEGYNYEDAILISERLVYDDVFTSIHVEKFEIEARQTKLGPEEITREIPNVGEDSLRNLDERGIVRIGAWMEAGDILVGKVTPKGESDQPPEEKLLRAIFGEKARDVRDNSLRVPNGEKGRVVDVRVFTREQGDELPPGANMVVRVYLAQKRKVQVGDKVAGRHGNKGIISKILPKEDMPYLPDGRPVDIVLNPLGVPSRMNVGQVFETLLGWAGACLNVRFKVTPFDEMYIKEASRYLVHEKLMEAREVTGDPWVYSDTGKHIGKIQVYDGRTGEAFDRPVTVGQIYMMKLVHLVDDKIHARSTGPYSLVTQQPLGGKAQQGGQRFGEMEVWALEAFGAAYTLQELLTVKSDDMTGRNEALNAIVKGKAIPRPGIPESFKVLVRELQSLGLDVSVHKIETQHDGSSRDVEVDLMADVGGRRTPNRPTYENIGGPREMEFSED</sequence>
<protein>
    <recommendedName>
        <fullName evidence="1">DNA-directed RNA polymerase subunit beta</fullName>
        <shortName evidence="1">RNAP subunit beta</shortName>
        <ecNumber evidence="1">2.7.7.6</ecNumber>
    </recommendedName>
    <alternativeName>
        <fullName evidence="1">RNA polymerase subunit beta</fullName>
    </alternativeName>
    <alternativeName>
        <fullName evidence="1">Transcriptase subunit beta</fullName>
    </alternativeName>
</protein>
<proteinExistence type="inferred from homology"/>
<organism>
    <name type="scientific">Gloeobacter violaceus (strain ATCC 29082 / PCC 7421)</name>
    <dbReference type="NCBI Taxonomy" id="251221"/>
    <lineage>
        <taxon>Bacteria</taxon>
        <taxon>Bacillati</taxon>
        <taxon>Cyanobacteriota</taxon>
        <taxon>Cyanophyceae</taxon>
        <taxon>Gloeobacterales</taxon>
        <taxon>Gloeobacteraceae</taxon>
        <taxon>Gloeobacter</taxon>
    </lineage>
</organism>
<gene>
    <name evidence="1" type="primary">rpoB</name>
    <name type="ordered locus">glr2283</name>
</gene>
<keyword id="KW-0240">DNA-directed RNA polymerase</keyword>
<keyword id="KW-0548">Nucleotidyltransferase</keyword>
<keyword id="KW-1185">Reference proteome</keyword>
<keyword id="KW-0804">Transcription</keyword>
<keyword id="KW-0808">Transferase</keyword>
<comment type="function">
    <text evidence="1">DNA-dependent RNA polymerase catalyzes the transcription of DNA into RNA using the four ribonucleoside triphosphates as substrates.</text>
</comment>
<comment type="catalytic activity">
    <reaction evidence="1">
        <text>RNA(n) + a ribonucleoside 5'-triphosphate = RNA(n+1) + diphosphate</text>
        <dbReference type="Rhea" id="RHEA:21248"/>
        <dbReference type="Rhea" id="RHEA-COMP:14527"/>
        <dbReference type="Rhea" id="RHEA-COMP:17342"/>
        <dbReference type="ChEBI" id="CHEBI:33019"/>
        <dbReference type="ChEBI" id="CHEBI:61557"/>
        <dbReference type="ChEBI" id="CHEBI:140395"/>
        <dbReference type="EC" id="2.7.7.6"/>
    </reaction>
</comment>
<comment type="subunit">
    <text evidence="1">In cyanobacteria the RNAP catalytic core is composed of 2 alpha, 1 beta, 1 beta', 1 gamma and 1 omega subunit. When a sigma factor is associated with the core the holoenzyme is formed, which can initiate transcription.</text>
</comment>
<comment type="similarity">
    <text evidence="1">Belongs to the RNA polymerase beta chain family.</text>
</comment>
<accession>Q7NIA0</accession>
<feature type="chain" id="PRO_0000047904" description="DNA-directed RNA polymerase subunit beta">
    <location>
        <begin position="1"/>
        <end position="1112"/>
    </location>
</feature>
<feature type="region of interest" description="Disordered" evidence="2">
    <location>
        <begin position="1087"/>
        <end position="1112"/>
    </location>
</feature>
<reference key="1">
    <citation type="journal article" date="2003" name="DNA Res.">
        <title>Complete genome structure of Gloeobacter violaceus PCC 7421, a cyanobacterium that lacks thylakoids.</title>
        <authorList>
            <person name="Nakamura Y."/>
            <person name="Kaneko T."/>
            <person name="Sato S."/>
            <person name="Mimuro M."/>
            <person name="Miyashita H."/>
            <person name="Tsuchiya T."/>
            <person name="Sasamoto S."/>
            <person name="Watanabe A."/>
            <person name="Kawashima K."/>
            <person name="Kishida Y."/>
            <person name="Kiyokawa C."/>
            <person name="Kohara M."/>
            <person name="Matsumoto M."/>
            <person name="Matsuno A."/>
            <person name="Nakazaki N."/>
            <person name="Shimpo S."/>
            <person name="Takeuchi C."/>
            <person name="Yamada M."/>
            <person name="Tabata S."/>
        </authorList>
    </citation>
    <scope>NUCLEOTIDE SEQUENCE [LARGE SCALE GENOMIC DNA]</scope>
    <source>
        <strain>ATCC 29082 / PCC 7421</strain>
    </source>
</reference>